<reference key="1">
    <citation type="journal article" date="2000" name="Nature">
        <title>Sequence and analysis of chromosome 3 of the plant Arabidopsis thaliana.</title>
        <authorList>
            <person name="Salanoubat M."/>
            <person name="Lemcke K."/>
            <person name="Rieger M."/>
            <person name="Ansorge W."/>
            <person name="Unseld M."/>
            <person name="Fartmann B."/>
            <person name="Valle G."/>
            <person name="Bloecker H."/>
            <person name="Perez-Alonso M."/>
            <person name="Obermaier B."/>
            <person name="Delseny M."/>
            <person name="Boutry M."/>
            <person name="Grivell L.A."/>
            <person name="Mache R."/>
            <person name="Puigdomenech P."/>
            <person name="De Simone V."/>
            <person name="Choisne N."/>
            <person name="Artiguenave F."/>
            <person name="Robert C."/>
            <person name="Brottier P."/>
            <person name="Wincker P."/>
            <person name="Cattolico L."/>
            <person name="Weissenbach J."/>
            <person name="Saurin W."/>
            <person name="Quetier F."/>
            <person name="Schaefer M."/>
            <person name="Mueller-Auer S."/>
            <person name="Gabel C."/>
            <person name="Fuchs M."/>
            <person name="Benes V."/>
            <person name="Wurmbach E."/>
            <person name="Drzonek H."/>
            <person name="Erfle H."/>
            <person name="Jordan N."/>
            <person name="Bangert S."/>
            <person name="Wiedelmann R."/>
            <person name="Kranz H."/>
            <person name="Voss H."/>
            <person name="Holland R."/>
            <person name="Brandt P."/>
            <person name="Nyakatura G."/>
            <person name="Vezzi A."/>
            <person name="D'Angelo M."/>
            <person name="Pallavicini A."/>
            <person name="Toppo S."/>
            <person name="Simionati B."/>
            <person name="Conrad A."/>
            <person name="Hornischer K."/>
            <person name="Kauer G."/>
            <person name="Loehnert T.-H."/>
            <person name="Nordsiek G."/>
            <person name="Reichelt J."/>
            <person name="Scharfe M."/>
            <person name="Schoen O."/>
            <person name="Bargues M."/>
            <person name="Terol J."/>
            <person name="Climent J."/>
            <person name="Navarro P."/>
            <person name="Collado C."/>
            <person name="Perez-Perez A."/>
            <person name="Ottenwaelder B."/>
            <person name="Duchemin D."/>
            <person name="Cooke R."/>
            <person name="Laudie M."/>
            <person name="Berger-Llauro C."/>
            <person name="Purnelle B."/>
            <person name="Masuy D."/>
            <person name="de Haan M."/>
            <person name="Maarse A.C."/>
            <person name="Alcaraz J.-P."/>
            <person name="Cottet A."/>
            <person name="Casacuberta E."/>
            <person name="Monfort A."/>
            <person name="Argiriou A."/>
            <person name="Flores M."/>
            <person name="Liguori R."/>
            <person name="Vitale D."/>
            <person name="Mannhaupt G."/>
            <person name="Haase D."/>
            <person name="Schoof H."/>
            <person name="Rudd S."/>
            <person name="Zaccaria P."/>
            <person name="Mewes H.-W."/>
            <person name="Mayer K.F.X."/>
            <person name="Kaul S."/>
            <person name="Town C.D."/>
            <person name="Koo H.L."/>
            <person name="Tallon L.J."/>
            <person name="Jenkins J."/>
            <person name="Rooney T."/>
            <person name="Rizzo M."/>
            <person name="Walts A."/>
            <person name="Utterback T."/>
            <person name="Fujii C.Y."/>
            <person name="Shea T.P."/>
            <person name="Creasy T.H."/>
            <person name="Haas B."/>
            <person name="Maiti R."/>
            <person name="Wu D."/>
            <person name="Peterson J."/>
            <person name="Van Aken S."/>
            <person name="Pai G."/>
            <person name="Militscher J."/>
            <person name="Sellers P."/>
            <person name="Gill J.E."/>
            <person name="Feldblyum T.V."/>
            <person name="Preuss D."/>
            <person name="Lin X."/>
            <person name="Nierman W.C."/>
            <person name="Salzberg S.L."/>
            <person name="White O."/>
            <person name="Venter J.C."/>
            <person name="Fraser C.M."/>
            <person name="Kaneko T."/>
            <person name="Nakamura Y."/>
            <person name="Sato S."/>
            <person name="Kato T."/>
            <person name="Asamizu E."/>
            <person name="Sasamoto S."/>
            <person name="Kimura T."/>
            <person name="Idesawa K."/>
            <person name="Kawashima K."/>
            <person name="Kishida Y."/>
            <person name="Kiyokawa C."/>
            <person name="Kohara M."/>
            <person name="Matsumoto M."/>
            <person name="Matsuno A."/>
            <person name="Muraki A."/>
            <person name="Nakayama S."/>
            <person name="Nakazaki N."/>
            <person name="Shinpo S."/>
            <person name="Takeuchi C."/>
            <person name="Wada T."/>
            <person name="Watanabe A."/>
            <person name="Yamada M."/>
            <person name="Yasuda M."/>
            <person name="Tabata S."/>
        </authorList>
    </citation>
    <scope>NUCLEOTIDE SEQUENCE [LARGE SCALE GENOMIC DNA]</scope>
    <source>
        <strain>cv. Columbia</strain>
    </source>
</reference>
<reference key="2">
    <citation type="journal article" date="2017" name="Plant J.">
        <title>Araport11: a complete reannotation of the Arabidopsis thaliana reference genome.</title>
        <authorList>
            <person name="Cheng C.Y."/>
            <person name="Krishnakumar V."/>
            <person name="Chan A.P."/>
            <person name="Thibaud-Nissen F."/>
            <person name="Schobel S."/>
            <person name="Town C.D."/>
        </authorList>
    </citation>
    <scope>GENOME REANNOTATION</scope>
    <source>
        <strain>cv. Columbia</strain>
    </source>
</reference>
<reference key="3">
    <citation type="journal article" date="2003" name="Science">
        <title>Empirical analysis of transcriptional activity in the Arabidopsis genome.</title>
        <authorList>
            <person name="Yamada K."/>
            <person name="Lim J."/>
            <person name="Dale J.M."/>
            <person name="Chen H."/>
            <person name="Shinn P."/>
            <person name="Palm C.J."/>
            <person name="Southwick A.M."/>
            <person name="Wu H.C."/>
            <person name="Kim C.J."/>
            <person name="Nguyen M."/>
            <person name="Pham P.K."/>
            <person name="Cheuk R.F."/>
            <person name="Karlin-Newmann G."/>
            <person name="Liu S.X."/>
            <person name="Lam B."/>
            <person name="Sakano H."/>
            <person name="Wu T."/>
            <person name="Yu G."/>
            <person name="Miranda M."/>
            <person name="Quach H.L."/>
            <person name="Tripp M."/>
            <person name="Chang C.H."/>
            <person name="Lee J.M."/>
            <person name="Toriumi M.J."/>
            <person name="Chan M.M."/>
            <person name="Tang C.C."/>
            <person name="Onodera C.S."/>
            <person name="Deng J.M."/>
            <person name="Akiyama K."/>
            <person name="Ansari Y."/>
            <person name="Arakawa T."/>
            <person name="Banh J."/>
            <person name="Banno F."/>
            <person name="Bowser L."/>
            <person name="Brooks S.Y."/>
            <person name="Carninci P."/>
            <person name="Chao Q."/>
            <person name="Choy N."/>
            <person name="Enju A."/>
            <person name="Goldsmith A.D."/>
            <person name="Gurjal M."/>
            <person name="Hansen N.F."/>
            <person name="Hayashizaki Y."/>
            <person name="Johnson-Hopson C."/>
            <person name="Hsuan V.W."/>
            <person name="Iida K."/>
            <person name="Karnes M."/>
            <person name="Khan S."/>
            <person name="Koesema E."/>
            <person name="Ishida J."/>
            <person name="Jiang P.X."/>
            <person name="Jones T."/>
            <person name="Kawai J."/>
            <person name="Kamiya A."/>
            <person name="Meyers C."/>
            <person name="Nakajima M."/>
            <person name="Narusaka M."/>
            <person name="Seki M."/>
            <person name="Sakurai T."/>
            <person name="Satou M."/>
            <person name="Tamse R."/>
            <person name="Vaysberg M."/>
            <person name="Wallender E.K."/>
            <person name="Wong C."/>
            <person name="Yamamura Y."/>
            <person name="Yuan S."/>
            <person name="Shinozaki K."/>
            <person name="Davis R.W."/>
            <person name="Theologis A."/>
            <person name="Ecker J.R."/>
        </authorList>
    </citation>
    <scope>NUCLEOTIDE SEQUENCE [LARGE SCALE MRNA]</scope>
    <source>
        <strain>cv. Columbia</strain>
    </source>
</reference>
<reference key="4">
    <citation type="journal article" date="2010" name="BMC Genomics">
        <title>Genome-wide cloning and sequence analysis of leucine-rich repeat receptor-like protein kinase genes in Arabidopsis thaliana.</title>
        <authorList>
            <person name="Gou X."/>
            <person name="He K."/>
            <person name="Yang H."/>
            <person name="Yuan T."/>
            <person name="Lin H."/>
            <person name="Clouse S.D."/>
            <person name="Li J."/>
        </authorList>
    </citation>
    <scope>NUCLEOTIDE SEQUENCE [LARGE SCALE MRNA]</scope>
    <source>
        <strain>cv. Columbia</strain>
    </source>
</reference>
<reference key="5">
    <citation type="submission" date="2006-07" db="EMBL/GenBank/DDBJ databases">
        <title>Large-scale analysis of RIKEN Arabidopsis full-length (RAFL) cDNAs.</title>
        <authorList>
            <person name="Totoki Y."/>
            <person name="Seki M."/>
            <person name="Ishida J."/>
            <person name="Nakajima M."/>
            <person name="Enju A."/>
            <person name="Kamiya A."/>
            <person name="Narusaka M."/>
            <person name="Shin-i T."/>
            <person name="Nakagawa M."/>
            <person name="Sakamoto N."/>
            <person name="Oishi K."/>
            <person name="Kohara Y."/>
            <person name="Kobayashi M."/>
            <person name="Toyoda A."/>
            <person name="Sakaki Y."/>
            <person name="Sakurai T."/>
            <person name="Iida K."/>
            <person name="Akiyama K."/>
            <person name="Satou M."/>
            <person name="Toyoda T."/>
            <person name="Konagaya A."/>
            <person name="Carninci P."/>
            <person name="Kawai J."/>
            <person name="Hayashizaki Y."/>
            <person name="Shinozaki K."/>
        </authorList>
    </citation>
    <scope>NUCLEOTIDE SEQUENCE [LARGE SCALE MRNA]</scope>
    <source>
        <strain>cv. Columbia</strain>
    </source>
</reference>
<reference key="6">
    <citation type="journal article" date="2006" name="Plant Cell">
        <title>The BAM1/BAM2 receptor-like kinases are important regulators of Arabidopsis early anther development.</title>
        <authorList>
            <person name="Hord C.L.H."/>
            <person name="Chen C."/>
            <person name="Deyoung B.J."/>
            <person name="Clark S.E."/>
            <person name="Ma H."/>
        </authorList>
    </citation>
    <scope>FUNCTION</scope>
    <scope>DISRUPTION PHENOTYPE</scope>
    <scope>DEVELOPMENTAL STAGE</scope>
</reference>
<reference key="7">
    <citation type="journal article" date="2006" name="Plant J.">
        <title>The CLAVATA1-related BAM1, BAM2 and BAM3 receptor kinase-like proteins are required for meristem function in Arabidopsis.</title>
        <authorList>
            <person name="DeYoung B.J."/>
            <person name="Bickle K.L."/>
            <person name="Schrage K.J."/>
            <person name="Muskett P."/>
            <person name="Patel K."/>
            <person name="Clark S.E."/>
        </authorList>
    </citation>
    <scope>FUNCTION</scope>
    <scope>DISRUPTION PHENOTYPE</scope>
    <scope>TISSUE SPECIFICITY</scope>
    <scope>DEVELOPMENTAL STAGE</scope>
</reference>
<reference key="8">
    <citation type="journal article" date="2008" name="Genetics">
        <title>BAM receptors regulate stem cell specification and organ development through complex interactions with CLAVATA signaling.</title>
        <authorList>
            <person name="Deyoung B.J."/>
            <person name="Clark S.E."/>
        </authorList>
    </citation>
    <scope>DISRUPTION PHENOTYPE</scope>
    <scope>FUNCTION</scope>
</reference>
<reference key="9">
    <citation type="journal article" date="2010" name="Plant J.">
        <title>CLAVATA2 forms a distinct CLE-binding receptor complex regulating Arabidopsis stem cell specification.</title>
        <authorList>
            <person name="Guo Y."/>
            <person name="Han L."/>
            <person name="Hymes M."/>
            <person name="Denver R."/>
            <person name="Clark S.E."/>
        </authorList>
    </citation>
    <scope>INTERACTION WITH MCLV3; CLE11; CLE18; CLE19; CLE22; CLE25; CLE26; CLE40; CLE41; CLE42; BAM1 AND CLV1</scope>
    <scope>SUBCELLULAR LOCATION</scope>
</reference>
<dbReference type="EC" id="2.7.11.1"/>
<dbReference type="EMBL" id="AL132965">
    <property type="protein sequence ID" value="CAB66905.1"/>
    <property type="molecule type" value="Genomic_DNA"/>
</dbReference>
<dbReference type="EMBL" id="CP002686">
    <property type="protein sequence ID" value="AEE78574.1"/>
    <property type="molecule type" value="Genomic_DNA"/>
</dbReference>
<dbReference type="EMBL" id="BT005722">
    <property type="protein sequence ID" value="AAO64138.1"/>
    <property type="molecule type" value="mRNA"/>
</dbReference>
<dbReference type="EMBL" id="BT006113">
    <property type="protein sequence ID" value="AAP04098.1"/>
    <property type="molecule type" value="mRNA"/>
</dbReference>
<dbReference type="EMBL" id="FJ708737">
    <property type="protein sequence ID" value="ACN59331.1"/>
    <property type="molecule type" value="mRNA"/>
</dbReference>
<dbReference type="EMBL" id="AK228595">
    <property type="protein sequence ID" value="BAF00510.1"/>
    <property type="molecule type" value="mRNA"/>
</dbReference>
<dbReference type="EMBL" id="AK230159">
    <property type="protein sequence ID" value="BAF01968.1"/>
    <property type="molecule type" value="mRNA"/>
</dbReference>
<dbReference type="PIR" id="T46033">
    <property type="entry name" value="T46033"/>
</dbReference>
<dbReference type="RefSeq" id="NP_190536.1">
    <property type="nucleotide sequence ID" value="NM_114827.4"/>
</dbReference>
<dbReference type="SMR" id="Q9M2Z1"/>
<dbReference type="BioGRID" id="9447">
    <property type="interactions" value="39"/>
</dbReference>
<dbReference type="FunCoup" id="Q9M2Z1">
    <property type="interactions" value="21"/>
</dbReference>
<dbReference type="IntAct" id="Q9M2Z1">
    <property type="interactions" value="39"/>
</dbReference>
<dbReference type="STRING" id="3702.Q9M2Z1"/>
<dbReference type="GlyCosmos" id="Q9M2Z1">
    <property type="glycosylation" value="16 sites, No reported glycans"/>
</dbReference>
<dbReference type="GlyGen" id="Q9M2Z1">
    <property type="glycosylation" value="16 sites"/>
</dbReference>
<dbReference type="iPTMnet" id="Q9M2Z1"/>
<dbReference type="PaxDb" id="3702-AT3G49670.1"/>
<dbReference type="ProteomicsDB" id="240710"/>
<dbReference type="EnsemblPlants" id="AT3G49670.1">
    <property type="protein sequence ID" value="AT3G49670.1"/>
    <property type="gene ID" value="AT3G49670"/>
</dbReference>
<dbReference type="GeneID" id="824129"/>
<dbReference type="Gramene" id="AT3G49670.1">
    <property type="protein sequence ID" value="AT3G49670.1"/>
    <property type="gene ID" value="AT3G49670"/>
</dbReference>
<dbReference type="KEGG" id="ath:AT3G49670"/>
<dbReference type="Araport" id="AT3G49670"/>
<dbReference type="TAIR" id="AT3G49670">
    <property type="gene designation" value="BAM2"/>
</dbReference>
<dbReference type="eggNOG" id="ENOG502QQRQ">
    <property type="taxonomic scope" value="Eukaryota"/>
</dbReference>
<dbReference type="HOGENOM" id="CLU_000288_22_1_1"/>
<dbReference type="InParanoid" id="Q9M2Z1"/>
<dbReference type="OMA" id="GHLHWNT"/>
<dbReference type="OrthoDB" id="676979at2759"/>
<dbReference type="PhylomeDB" id="Q9M2Z1"/>
<dbReference type="PRO" id="PR:Q9M2Z1"/>
<dbReference type="Proteomes" id="UP000006548">
    <property type="component" value="Chromosome 3"/>
</dbReference>
<dbReference type="ExpressionAtlas" id="Q9M2Z1">
    <property type="expression patterns" value="baseline and differential"/>
</dbReference>
<dbReference type="GO" id="GO:0005886">
    <property type="term" value="C:plasma membrane"/>
    <property type="evidence" value="ECO:0007669"/>
    <property type="project" value="UniProtKB-SubCell"/>
</dbReference>
<dbReference type="GO" id="GO:0005524">
    <property type="term" value="F:ATP binding"/>
    <property type="evidence" value="ECO:0007669"/>
    <property type="project" value="UniProtKB-KW"/>
</dbReference>
<dbReference type="GO" id="GO:0106310">
    <property type="term" value="F:protein serine kinase activity"/>
    <property type="evidence" value="ECO:0007669"/>
    <property type="project" value="RHEA"/>
</dbReference>
<dbReference type="GO" id="GO:0004674">
    <property type="term" value="F:protein serine/threonine kinase activity"/>
    <property type="evidence" value="ECO:0007669"/>
    <property type="project" value="UniProtKB-KW"/>
</dbReference>
<dbReference type="GO" id="GO:0033612">
    <property type="term" value="F:receptor serine/threonine kinase binding"/>
    <property type="evidence" value="ECO:0000353"/>
    <property type="project" value="UniProtKB"/>
</dbReference>
<dbReference type="GO" id="GO:0030154">
    <property type="term" value="P:cell differentiation"/>
    <property type="evidence" value="ECO:0007669"/>
    <property type="project" value="UniProtKB-KW"/>
</dbReference>
<dbReference type="GO" id="GO:0048437">
    <property type="term" value="P:floral organ development"/>
    <property type="evidence" value="ECO:0000316"/>
    <property type="project" value="TAIR"/>
</dbReference>
<dbReference type="GO" id="GO:0048229">
    <property type="term" value="P:gametophyte development"/>
    <property type="evidence" value="ECO:0000316"/>
    <property type="project" value="TAIR"/>
</dbReference>
<dbReference type="GO" id="GO:0010075">
    <property type="term" value="P:regulation of meristem growth"/>
    <property type="evidence" value="ECO:0000316"/>
    <property type="project" value="TAIR"/>
</dbReference>
<dbReference type="GO" id="GO:0009934">
    <property type="term" value="P:regulation of meristem structural organization"/>
    <property type="evidence" value="ECO:0000316"/>
    <property type="project" value="TAIR"/>
</dbReference>
<dbReference type="FunFam" id="1.10.510.10:FF:000201">
    <property type="entry name" value="Leucine-rich repeat receptor-like serine/threonine-protein kinase"/>
    <property type="match status" value="1"/>
</dbReference>
<dbReference type="FunFam" id="3.30.200.20:FF:000292">
    <property type="entry name" value="Leucine-rich repeat receptor-like serine/threonine-protein kinase BAM1"/>
    <property type="match status" value="1"/>
</dbReference>
<dbReference type="FunFam" id="3.80.10.10:FF:000570">
    <property type="entry name" value="Leucine-rich repeat receptor-like serine/threonine-protein kinase BAM1"/>
    <property type="match status" value="1"/>
</dbReference>
<dbReference type="FunFam" id="3.80.10.10:FF:000108">
    <property type="entry name" value="Leucine-rich repeat receptor-like serine/threonine-protein kinase BAM3"/>
    <property type="match status" value="1"/>
</dbReference>
<dbReference type="Gene3D" id="3.30.200.20">
    <property type="entry name" value="Phosphorylase Kinase, domain 1"/>
    <property type="match status" value="1"/>
</dbReference>
<dbReference type="Gene3D" id="3.80.10.10">
    <property type="entry name" value="Ribonuclease Inhibitor"/>
    <property type="match status" value="4"/>
</dbReference>
<dbReference type="Gene3D" id="1.10.510.10">
    <property type="entry name" value="Transferase(Phosphotransferase) domain 1"/>
    <property type="match status" value="1"/>
</dbReference>
<dbReference type="InterPro" id="IPR011009">
    <property type="entry name" value="Kinase-like_dom_sf"/>
</dbReference>
<dbReference type="InterPro" id="IPR001611">
    <property type="entry name" value="Leu-rich_rpt"/>
</dbReference>
<dbReference type="InterPro" id="IPR003591">
    <property type="entry name" value="Leu-rich_rpt_typical-subtyp"/>
</dbReference>
<dbReference type="InterPro" id="IPR032675">
    <property type="entry name" value="LRR_dom_sf"/>
</dbReference>
<dbReference type="InterPro" id="IPR013210">
    <property type="entry name" value="LRR_N_plant-typ"/>
</dbReference>
<dbReference type="InterPro" id="IPR055414">
    <property type="entry name" value="LRR_R13L4/SHOC2-like"/>
</dbReference>
<dbReference type="InterPro" id="IPR051716">
    <property type="entry name" value="Plant_RL_S/T_kinase"/>
</dbReference>
<dbReference type="InterPro" id="IPR000719">
    <property type="entry name" value="Prot_kinase_dom"/>
</dbReference>
<dbReference type="InterPro" id="IPR001245">
    <property type="entry name" value="Ser-Thr/Tyr_kinase_cat_dom"/>
</dbReference>
<dbReference type="InterPro" id="IPR008271">
    <property type="entry name" value="Ser/Thr_kinase_AS"/>
</dbReference>
<dbReference type="PANTHER" id="PTHR48053">
    <property type="entry name" value="LEUCINE RICH REPEAT FAMILY PROTEIN, EXPRESSED"/>
    <property type="match status" value="1"/>
</dbReference>
<dbReference type="PANTHER" id="PTHR48053:SF131">
    <property type="entry name" value="LEUCINE-RICH REPEAT RECEPTOR-LIKE SERINE_THREONINE-PROTEIN KINASE BAM2"/>
    <property type="match status" value="1"/>
</dbReference>
<dbReference type="Pfam" id="PF00560">
    <property type="entry name" value="LRR_1"/>
    <property type="match status" value="6"/>
</dbReference>
<dbReference type="Pfam" id="PF23598">
    <property type="entry name" value="LRR_14"/>
    <property type="match status" value="1"/>
</dbReference>
<dbReference type="Pfam" id="PF08263">
    <property type="entry name" value="LRRNT_2"/>
    <property type="match status" value="1"/>
</dbReference>
<dbReference type="Pfam" id="PF07714">
    <property type="entry name" value="PK_Tyr_Ser-Thr"/>
    <property type="match status" value="1"/>
</dbReference>
<dbReference type="SMART" id="SM00369">
    <property type="entry name" value="LRR_TYP"/>
    <property type="match status" value="6"/>
</dbReference>
<dbReference type="SMART" id="SM00220">
    <property type="entry name" value="S_TKc"/>
    <property type="match status" value="1"/>
</dbReference>
<dbReference type="SUPFAM" id="SSF52058">
    <property type="entry name" value="L domain-like"/>
    <property type="match status" value="1"/>
</dbReference>
<dbReference type="SUPFAM" id="SSF56112">
    <property type="entry name" value="Protein kinase-like (PK-like)"/>
    <property type="match status" value="1"/>
</dbReference>
<dbReference type="SUPFAM" id="SSF52047">
    <property type="entry name" value="RNI-like"/>
    <property type="match status" value="1"/>
</dbReference>
<dbReference type="PROSITE" id="PS51450">
    <property type="entry name" value="LRR"/>
    <property type="match status" value="13"/>
</dbReference>
<dbReference type="PROSITE" id="PS50011">
    <property type="entry name" value="PROTEIN_KINASE_DOM"/>
    <property type="match status" value="1"/>
</dbReference>
<dbReference type="PROSITE" id="PS00108">
    <property type="entry name" value="PROTEIN_KINASE_ST"/>
    <property type="match status" value="1"/>
</dbReference>
<protein>
    <recommendedName>
        <fullName>Leucine-rich repeat receptor-like serine/threonine-protein kinase BAM2</fullName>
        <ecNumber>2.7.11.1</ecNumber>
    </recommendedName>
    <alternativeName>
        <fullName>Protein BARELY ANY MERISTEM 2</fullName>
    </alternativeName>
</protein>
<feature type="signal peptide" evidence="4">
    <location>
        <begin position="1"/>
        <end position="22"/>
    </location>
</feature>
<feature type="chain" id="PRO_0000403353" description="Leucine-rich repeat receptor-like serine/threonine-protein kinase BAM2">
    <location>
        <begin position="23"/>
        <end position="1002"/>
    </location>
</feature>
<feature type="topological domain" description="Extracellular" evidence="4">
    <location>
        <begin position="23"/>
        <end position="636"/>
    </location>
</feature>
<feature type="transmembrane region" description="Helical" evidence="4">
    <location>
        <begin position="637"/>
        <end position="657"/>
    </location>
</feature>
<feature type="topological domain" description="Cytoplasmic" evidence="4">
    <location>
        <begin position="658"/>
        <end position="1002"/>
    </location>
</feature>
<feature type="repeat" description="LRR 1">
    <location>
        <begin position="68"/>
        <end position="92"/>
    </location>
</feature>
<feature type="repeat" description="LRR 2">
    <location>
        <begin position="93"/>
        <end position="116"/>
    </location>
</feature>
<feature type="repeat" description="LRR 3">
    <location>
        <begin position="118"/>
        <end position="140"/>
    </location>
</feature>
<feature type="repeat" description="LRR 4">
    <location>
        <begin position="141"/>
        <end position="165"/>
    </location>
</feature>
<feature type="repeat" description="LRR 5">
    <location>
        <begin position="167"/>
        <end position="188"/>
    </location>
</feature>
<feature type="repeat" description="LRR 6">
    <location>
        <begin position="189"/>
        <end position="213"/>
    </location>
</feature>
<feature type="repeat" description="LRR 7">
    <location>
        <begin position="215"/>
        <end position="238"/>
    </location>
</feature>
<feature type="repeat" description="LRR 8">
    <location>
        <begin position="239"/>
        <end position="262"/>
    </location>
</feature>
<feature type="repeat" description="LRR 9">
    <location>
        <begin position="263"/>
        <end position="285"/>
    </location>
</feature>
<feature type="repeat" description="LRR 10">
    <location>
        <begin position="286"/>
        <end position="309"/>
    </location>
</feature>
<feature type="repeat" description="LRR 11">
    <location>
        <begin position="311"/>
        <end position="334"/>
    </location>
</feature>
<feature type="repeat" description="LRR 12">
    <location>
        <begin position="335"/>
        <end position="358"/>
    </location>
</feature>
<feature type="repeat" description="LRR 13">
    <location>
        <begin position="359"/>
        <end position="382"/>
    </location>
</feature>
<feature type="repeat" description="LRR 14">
    <location>
        <begin position="384"/>
        <end position="406"/>
    </location>
</feature>
<feature type="repeat" description="LRR 15">
    <location>
        <begin position="407"/>
        <end position="430"/>
    </location>
</feature>
<feature type="repeat" description="LRR 16">
    <location>
        <begin position="431"/>
        <end position="456"/>
    </location>
</feature>
<feature type="repeat" description="LRR 17">
    <location>
        <begin position="458"/>
        <end position="479"/>
    </location>
</feature>
<feature type="repeat" description="LRR 18">
    <location>
        <begin position="480"/>
        <end position="503"/>
    </location>
</feature>
<feature type="repeat" description="LRR 19">
    <location>
        <begin position="505"/>
        <end position="527"/>
    </location>
</feature>
<feature type="repeat" description="LRR 20">
    <location>
        <begin position="528"/>
        <end position="551"/>
    </location>
</feature>
<feature type="repeat" description="LRR 21">
    <location>
        <begin position="552"/>
        <end position="575"/>
    </location>
</feature>
<feature type="repeat" description="LRR 22">
    <location>
        <begin position="577"/>
        <end position="600"/>
    </location>
</feature>
<feature type="domain" description="Protein kinase" evidence="5">
    <location>
        <begin position="690"/>
        <end position="967"/>
    </location>
</feature>
<feature type="region of interest" description="Disordered" evidence="7">
    <location>
        <begin position="969"/>
        <end position="1002"/>
    </location>
</feature>
<feature type="compositionally biased region" description="Low complexity" evidence="7">
    <location>
        <begin position="989"/>
        <end position="1002"/>
    </location>
</feature>
<feature type="active site" description="Proton acceptor" evidence="5 6">
    <location>
        <position position="816"/>
    </location>
</feature>
<feature type="binding site" evidence="5">
    <location>
        <begin position="696"/>
        <end position="704"/>
    </location>
    <ligand>
        <name>ATP</name>
        <dbReference type="ChEBI" id="CHEBI:30616"/>
    </ligand>
</feature>
<feature type="binding site" evidence="5">
    <location>
        <position position="718"/>
    </location>
    <ligand>
        <name>ATP</name>
        <dbReference type="ChEBI" id="CHEBI:30616"/>
    </ligand>
</feature>
<feature type="modified residue" description="Phosphothreonine" evidence="2">
    <location>
        <position position="682"/>
    </location>
</feature>
<feature type="modified residue" description="Phosphotyrosine" evidence="2">
    <location>
        <position position="765"/>
    </location>
</feature>
<feature type="modified residue" description="Phosphotyrosine" evidence="1">
    <location>
        <position position="803"/>
    </location>
</feature>
<feature type="modified residue" description="Phosphoserine" evidence="3">
    <location>
        <position position="851"/>
    </location>
</feature>
<feature type="modified residue" description="Phosphotyrosine" evidence="1">
    <location>
        <position position="859"/>
    </location>
</feature>
<feature type="modified residue" description="Phosphotyrosine" evidence="3">
    <location>
        <position position="866"/>
    </location>
</feature>
<feature type="modified residue" description="Phosphothreonine" evidence="3">
    <location>
        <position position="867"/>
    </location>
</feature>
<feature type="glycosylation site" description="N-linked (GlcNAc...) asparagine" evidence="4">
    <location>
        <position position="51"/>
    </location>
</feature>
<feature type="glycosylation site" description="N-linked (GlcNAc...) asparagine" evidence="4">
    <location>
        <position position="80"/>
    </location>
</feature>
<feature type="glycosylation site" description="N-linked (GlcNAc...) asparagine" evidence="4">
    <location>
        <position position="97"/>
    </location>
</feature>
<feature type="glycosylation site" description="N-linked (GlcNAc...) asparagine" evidence="4">
    <location>
        <position position="123"/>
    </location>
</feature>
<feature type="glycosylation site" description="N-linked (GlcNAc...) asparagine" evidence="4">
    <location>
        <position position="130"/>
    </location>
</feature>
<feature type="glycosylation site" description="N-linked (GlcNAc...) asparagine" evidence="4">
    <location>
        <position position="153"/>
    </location>
</feature>
<feature type="glycosylation site" description="N-linked (GlcNAc...) asparagine" evidence="4">
    <location>
        <position position="164"/>
    </location>
</feature>
<feature type="glycosylation site" description="N-linked (GlcNAc...) asparagine" evidence="4">
    <location>
        <position position="212"/>
    </location>
</feature>
<feature type="glycosylation site" description="N-linked (GlcNAc...) asparagine" evidence="4">
    <location>
        <position position="237"/>
    </location>
</feature>
<feature type="glycosylation site" description="N-linked (GlcNAc...) asparagine" evidence="4">
    <location>
        <position position="312"/>
    </location>
</feature>
<feature type="glycosylation site" description="N-linked (GlcNAc...) asparagine" evidence="4">
    <location>
        <position position="346"/>
    </location>
</feature>
<feature type="glycosylation site" description="N-linked (GlcNAc...) asparagine" evidence="4">
    <location>
        <position position="420"/>
    </location>
</feature>
<feature type="glycosylation site" description="N-linked (GlcNAc...) asparagine" evidence="4">
    <location>
        <position position="478"/>
    </location>
</feature>
<feature type="glycosylation site" description="N-linked (GlcNAc...) asparagine" evidence="4">
    <location>
        <position position="558"/>
    </location>
</feature>
<feature type="glycosylation site" description="N-linked (GlcNAc...) asparagine" evidence="4">
    <location>
        <position position="587"/>
    </location>
</feature>
<feature type="glycosylation site" description="N-linked (GlcNAc...) asparagine" evidence="4">
    <location>
        <position position="602"/>
    </location>
</feature>
<accession>Q9M2Z1</accession>
<accession>Q0WLN9</accession>
<comment type="function">
    <text evidence="8 9 10">Necessary for male gametophyte development, as well as ovule specification and function. Involved in cell-cell communication process required during early anther development, and regulating cell division and differentiation to organize cell layers. Required for the development of high-ordered vascular strands within the leaf and a correlated control of leaf shape, size and symmetry. May regulate the CLV1-dependent CLV3-mediated signaling in meristems maintenance.</text>
</comment>
<comment type="catalytic activity">
    <reaction>
        <text>L-seryl-[protein] + ATP = O-phospho-L-seryl-[protein] + ADP + H(+)</text>
        <dbReference type="Rhea" id="RHEA:17989"/>
        <dbReference type="Rhea" id="RHEA-COMP:9863"/>
        <dbReference type="Rhea" id="RHEA-COMP:11604"/>
        <dbReference type="ChEBI" id="CHEBI:15378"/>
        <dbReference type="ChEBI" id="CHEBI:29999"/>
        <dbReference type="ChEBI" id="CHEBI:30616"/>
        <dbReference type="ChEBI" id="CHEBI:83421"/>
        <dbReference type="ChEBI" id="CHEBI:456216"/>
        <dbReference type="EC" id="2.7.11.1"/>
    </reaction>
</comment>
<comment type="catalytic activity">
    <reaction>
        <text>L-threonyl-[protein] + ATP = O-phospho-L-threonyl-[protein] + ADP + H(+)</text>
        <dbReference type="Rhea" id="RHEA:46608"/>
        <dbReference type="Rhea" id="RHEA-COMP:11060"/>
        <dbReference type="Rhea" id="RHEA-COMP:11605"/>
        <dbReference type="ChEBI" id="CHEBI:15378"/>
        <dbReference type="ChEBI" id="CHEBI:30013"/>
        <dbReference type="ChEBI" id="CHEBI:30616"/>
        <dbReference type="ChEBI" id="CHEBI:61977"/>
        <dbReference type="ChEBI" id="CHEBI:456216"/>
        <dbReference type="EC" id="2.7.11.1"/>
    </reaction>
</comment>
<comment type="subunit">
    <text evidence="11">Interacts with BAM1 and CLV1. Binds to the CLV3, CLE11, CLE18, CLE19, CLE22, CLE25, CLE26, CLE40, CLE41 and CLE42 mature peptides, probably via its extracellular leucine-rich repeat region.</text>
</comment>
<comment type="interaction">
    <interactant intactId="EBI-16933791">
        <id>Q9M2Z1</id>
    </interactant>
    <interactant intactId="EBI-20654598">
        <id>F4I065</id>
        <label>At1g49100</label>
    </interactant>
    <organismsDiffer>false</organismsDiffer>
    <experiments>2</experiments>
</comment>
<comment type="interaction">
    <interactant intactId="EBI-16933791">
        <id>Q9M2Z1</id>
    </interactant>
    <interactant intactId="EBI-20651541">
        <id>C0LGJ9</id>
        <label>At2g02780</label>
    </interactant>
    <organismsDiffer>false</organismsDiffer>
    <experiments>2</experiments>
</comment>
<comment type="interaction">
    <interactant intactId="EBI-16933791">
        <id>Q9M2Z1</id>
    </interactant>
    <interactant intactId="EBI-20651413">
        <id>Q9LJF3</id>
        <label>BRL3</label>
    </interactant>
    <organismsDiffer>false</organismsDiffer>
    <experiments>2</experiments>
</comment>
<comment type="subcellular location">
    <subcellularLocation>
        <location evidence="11">Cell membrane</location>
        <topology evidence="11">Single-pass type I membrane protein</topology>
    </subcellularLocation>
</comment>
<comment type="tissue specificity">
    <text evidence="8">Expressed in seedlings, roots, rosette leaves, stems, inflorescences, flowers and siliques.</text>
</comment>
<comment type="developmental stage">
    <text evidence="8 9">Expressed in a ring surrounding the center of meristems extended in the cortex of developing stems and older pedicels. Present in all developing floral organs, especially in anthers and gynoecium (mainly in ovules). Observed in anthers at stage 2 in the archesporial cells. At stage 3, localized in the primary sporogenous and primary parietal cells. Subsequently preferentially expressed in the sporogenous cells at anther stage 4. Later restricted to the tapetum and pollen mother cells (PMCs) before disappearing progressively.</text>
</comment>
<comment type="disruption phenotype">
    <text evidence="8 9 10">Rescues partially CLV3 disruption. When associated with BAM1 disruption, abnormal anthers at a very early stage and later lack of endothecium, middle and tapetum layers. Loss of stem cells at the shoot and flower meristems.</text>
</comment>
<comment type="similarity">
    <text evidence="5">Belongs to the protein kinase superfamily. Ser/Thr protein kinase family.</text>
</comment>
<proteinExistence type="evidence at protein level"/>
<organism>
    <name type="scientific">Arabidopsis thaliana</name>
    <name type="common">Mouse-ear cress</name>
    <dbReference type="NCBI Taxonomy" id="3702"/>
    <lineage>
        <taxon>Eukaryota</taxon>
        <taxon>Viridiplantae</taxon>
        <taxon>Streptophyta</taxon>
        <taxon>Embryophyta</taxon>
        <taxon>Tracheophyta</taxon>
        <taxon>Spermatophyta</taxon>
        <taxon>Magnoliopsida</taxon>
        <taxon>eudicotyledons</taxon>
        <taxon>Gunneridae</taxon>
        <taxon>Pentapetalae</taxon>
        <taxon>rosids</taxon>
        <taxon>malvids</taxon>
        <taxon>Brassicales</taxon>
        <taxon>Brassicaceae</taxon>
        <taxon>Camelineae</taxon>
        <taxon>Arabidopsis</taxon>
    </lineage>
</organism>
<sequence length="1002" mass="109244">MKLLLLLLLLLLLHISHSFTVAKPITELHALLSLKSSFTIDEHSPLLTSWNLSTTFCSWTGVTCDVSLRHVTSLDLSGLNLSGTLSSDVAHLPLLQNLSLAANQISGPIPPQISNLYELRHLNLSNNVFNGSFPDELSSGLVNLRVLDLYNNNLTGDLPVSLTNLTQLRHLHLGGNYFSGKIPATYGTWPVLEYLAVSGNELTGKIPPEIGNLTTLRELYIGYYNAFENGLPPEIGNLSELVRFDAANCGLTGEIPPEIGKLQKLDTLFLQVNAFTGTITQELGLISSLKSMDLSNNMFTGEIPTSFSQLKNLTLLNLFRNKLYGAIPEFIGEMPELEVLQLWENNFTGSIPQKLGENGRLVILDLSSNKLTGTLPPNMCSGNRLMTLITLGNFLFGSIPDSLGKCESLTRIRMGENFLNGSIPKELFGLPKLSQVELQDNYLTGELPISGGGVSGDLGQISLSNNQLSGSLPAAIGNLSGVQKLLLDGNKFSGSIPPEIGRLQQLSKLDFSHNLFSGRIAPEISRCKLLTFVDLSRNELSGDIPNELTGMKILNYLNLSRNHLVGSIPVTIASMQSLTSVDFSYNNLSGLVPSTGQFSYFNYTSFVGNSHLCGPYLGPCGKGTHQSHVKPLSATTKLLLVLGLLFCSMVFAIVAIIKARSLRNASEAKAWRLTAFQRLDFTCDDVLDSLKEDNIIGKGGAGIVYKGTMPKGDLVAVKRLATMSHGSSHDHGFNAEIQTLGRIRHRHIVRLLGFCSNHETNLLVYEYMPNGSLGEVLHGKKGGHLHWNTRYKIALEAAKGLCYLHHDCSPLIVHRDVKSNNILLDSNFEAHVADFGLAKFLQDSGTSECMSAIAGSYGYIAPEYAYTLKVDEKSDVYSFGVVLLELITGKKPVGEFGDGVDIVQWVRSMTDSNKDCVLKVIDLRLSSVPVHEVTHVFYVALLCVEEQAVERPTMREVVQILTEIPKIPLSKQQAAESDVTEKAPAINESSPDSGSPPDLLSN</sequence>
<name>BAME2_ARATH</name>
<keyword id="KW-0067">ATP-binding</keyword>
<keyword id="KW-1003">Cell membrane</keyword>
<keyword id="KW-0217">Developmental protein</keyword>
<keyword id="KW-0221">Differentiation</keyword>
<keyword id="KW-0325">Glycoprotein</keyword>
<keyword id="KW-0418">Kinase</keyword>
<keyword id="KW-0433">Leucine-rich repeat</keyword>
<keyword id="KW-0472">Membrane</keyword>
<keyword id="KW-0547">Nucleotide-binding</keyword>
<keyword id="KW-0597">Phosphoprotein</keyword>
<keyword id="KW-0675">Receptor</keyword>
<keyword id="KW-1185">Reference proteome</keyword>
<keyword id="KW-0677">Repeat</keyword>
<keyword id="KW-0723">Serine/threonine-protein kinase</keyword>
<keyword id="KW-0732">Signal</keyword>
<keyword id="KW-0808">Transferase</keyword>
<keyword id="KW-0812">Transmembrane</keyword>
<keyword id="KW-1133">Transmembrane helix</keyword>
<evidence type="ECO:0000250" key="1">
    <source>
        <dbReference type="UniProtKB" id="C0LGT6"/>
    </source>
</evidence>
<evidence type="ECO:0000250" key="2">
    <source>
        <dbReference type="UniProtKB" id="O22476"/>
    </source>
</evidence>
<evidence type="ECO:0000250" key="3">
    <source>
        <dbReference type="UniProtKB" id="Q9M0G7"/>
    </source>
</evidence>
<evidence type="ECO:0000255" key="4"/>
<evidence type="ECO:0000255" key="5">
    <source>
        <dbReference type="PROSITE-ProRule" id="PRU00159"/>
    </source>
</evidence>
<evidence type="ECO:0000255" key="6">
    <source>
        <dbReference type="PROSITE-ProRule" id="PRU10027"/>
    </source>
</evidence>
<evidence type="ECO:0000256" key="7">
    <source>
        <dbReference type="SAM" id="MobiDB-lite"/>
    </source>
</evidence>
<evidence type="ECO:0000269" key="8">
    <source>
    </source>
</evidence>
<evidence type="ECO:0000269" key="9">
    <source>
    </source>
</evidence>
<evidence type="ECO:0000269" key="10">
    <source>
    </source>
</evidence>
<evidence type="ECO:0000269" key="11">
    <source>
    </source>
</evidence>
<gene>
    <name type="primary">BAM2</name>
    <name type="ordered locus">At3g49670</name>
    <name type="ORF">T16K5.20</name>
</gene>